<dbReference type="EMBL" id="AE008922">
    <property type="protein sequence ID" value="AAM40668.1"/>
    <property type="molecule type" value="Genomic_DNA"/>
</dbReference>
<dbReference type="RefSeq" id="NP_636744.1">
    <property type="nucleotide sequence ID" value="NC_003902.1"/>
</dbReference>
<dbReference type="RefSeq" id="WP_011036562.1">
    <property type="nucleotide sequence ID" value="NC_003902.1"/>
</dbReference>
<dbReference type="SMR" id="Q8PAV6"/>
<dbReference type="STRING" id="190485.XCC1370"/>
<dbReference type="EnsemblBacteria" id="AAM40668">
    <property type="protein sequence ID" value="AAM40668"/>
    <property type="gene ID" value="XCC1370"/>
</dbReference>
<dbReference type="GeneID" id="58014032"/>
<dbReference type="KEGG" id="xcc:XCC1370"/>
<dbReference type="PATRIC" id="fig|190485.4.peg.1472"/>
<dbReference type="eggNOG" id="COG0233">
    <property type="taxonomic scope" value="Bacteria"/>
</dbReference>
<dbReference type="HOGENOM" id="CLU_073981_2_0_6"/>
<dbReference type="OrthoDB" id="9804006at2"/>
<dbReference type="Proteomes" id="UP000001010">
    <property type="component" value="Chromosome"/>
</dbReference>
<dbReference type="GO" id="GO:0005737">
    <property type="term" value="C:cytoplasm"/>
    <property type="evidence" value="ECO:0000318"/>
    <property type="project" value="GO_Central"/>
</dbReference>
<dbReference type="GO" id="GO:0005829">
    <property type="term" value="C:cytosol"/>
    <property type="evidence" value="ECO:0007669"/>
    <property type="project" value="GOC"/>
</dbReference>
<dbReference type="GO" id="GO:0043023">
    <property type="term" value="F:ribosomal large subunit binding"/>
    <property type="evidence" value="ECO:0000318"/>
    <property type="project" value="GO_Central"/>
</dbReference>
<dbReference type="GO" id="GO:0002184">
    <property type="term" value="P:cytoplasmic translational termination"/>
    <property type="evidence" value="ECO:0000318"/>
    <property type="project" value="GO_Central"/>
</dbReference>
<dbReference type="GO" id="GO:0006412">
    <property type="term" value="P:translation"/>
    <property type="evidence" value="ECO:0000318"/>
    <property type="project" value="GO_Central"/>
</dbReference>
<dbReference type="CDD" id="cd00520">
    <property type="entry name" value="RRF"/>
    <property type="match status" value="1"/>
</dbReference>
<dbReference type="FunFam" id="1.10.132.20:FF:000001">
    <property type="entry name" value="Ribosome-recycling factor"/>
    <property type="match status" value="1"/>
</dbReference>
<dbReference type="FunFam" id="3.30.1360.40:FF:000001">
    <property type="entry name" value="Ribosome-recycling factor"/>
    <property type="match status" value="1"/>
</dbReference>
<dbReference type="Gene3D" id="3.30.1360.40">
    <property type="match status" value="1"/>
</dbReference>
<dbReference type="Gene3D" id="1.10.132.20">
    <property type="entry name" value="Ribosome-recycling factor"/>
    <property type="match status" value="1"/>
</dbReference>
<dbReference type="HAMAP" id="MF_00040">
    <property type="entry name" value="RRF"/>
    <property type="match status" value="1"/>
</dbReference>
<dbReference type="InterPro" id="IPR002661">
    <property type="entry name" value="Ribosome_recyc_fac"/>
</dbReference>
<dbReference type="InterPro" id="IPR023584">
    <property type="entry name" value="Ribosome_recyc_fac_dom"/>
</dbReference>
<dbReference type="InterPro" id="IPR036191">
    <property type="entry name" value="RRF_sf"/>
</dbReference>
<dbReference type="NCBIfam" id="TIGR00496">
    <property type="entry name" value="frr"/>
    <property type="match status" value="1"/>
</dbReference>
<dbReference type="PANTHER" id="PTHR20982:SF3">
    <property type="entry name" value="MITOCHONDRIAL RIBOSOME RECYCLING FACTOR PSEUDO 1"/>
    <property type="match status" value="1"/>
</dbReference>
<dbReference type="PANTHER" id="PTHR20982">
    <property type="entry name" value="RIBOSOME RECYCLING FACTOR"/>
    <property type="match status" value="1"/>
</dbReference>
<dbReference type="Pfam" id="PF01765">
    <property type="entry name" value="RRF"/>
    <property type="match status" value="1"/>
</dbReference>
<dbReference type="SUPFAM" id="SSF55194">
    <property type="entry name" value="Ribosome recycling factor, RRF"/>
    <property type="match status" value="1"/>
</dbReference>
<sequence>MLNQIKQDAQTRMTKSIDALRHSLTTVRTGRASPALLDNIKVKAYGTDTPLNQVASISVSEGRSLVISLFDKGMIKDVEKAIYASDLGLTPTVVGTVIRLNLPPLTEERRKELSKSVHGEGEDAKVAIRNIRRDANQQVKDLLKDKQVTEDEARGAEDDIQKLTDKAIKDVDEVVKGKEQELMTV</sequence>
<evidence type="ECO:0000255" key="1">
    <source>
        <dbReference type="HAMAP-Rule" id="MF_00040"/>
    </source>
</evidence>
<protein>
    <recommendedName>
        <fullName evidence="1">Ribosome-recycling factor</fullName>
        <shortName evidence="1">RRF</shortName>
    </recommendedName>
    <alternativeName>
        <fullName evidence="1">Ribosome-releasing factor</fullName>
    </alternativeName>
</protein>
<reference key="1">
    <citation type="journal article" date="2002" name="Nature">
        <title>Comparison of the genomes of two Xanthomonas pathogens with differing host specificities.</title>
        <authorList>
            <person name="da Silva A.C.R."/>
            <person name="Ferro J.A."/>
            <person name="Reinach F.C."/>
            <person name="Farah C.S."/>
            <person name="Furlan L.R."/>
            <person name="Quaggio R.B."/>
            <person name="Monteiro-Vitorello C.B."/>
            <person name="Van Sluys M.A."/>
            <person name="Almeida N.F. Jr."/>
            <person name="Alves L.M.C."/>
            <person name="do Amaral A.M."/>
            <person name="Bertolini M.C."/>
            <person name="Camargo L.E.A."/>
            <person name="Camarotte G."/>
            <person name="Cannavan F."/>
            <person name="Cardozo J."/>
            <person name="Chambergo F."/>
            <person name="Ciapina L.P."/>
            <person name="Cicarelli R.M.B."/>
            <person name="Coutinho L.L."/>
            <person name="Cursino-Santos J.R."/>
            <person name="El-Dorry H."/>
            <person name="Faria J.B."/>
            <person name="Ferreira A.J.S."/>
            <person name="Ferreira R.C.C."/>
            <person name="Ferro M.I.T."/>
            <person name="Formighieri E.F."/>
            <person name="Franco M.C."/>
            <person name="Greggio C.C."/>
            <person name="Gruber A."/>
            <person name="Katsuyama A.M."/>
            <person name="Kishi L.T."/>
            <person name="Leite R.P."/>
            <person name="Lemos E.G.M."/>
            <person name="Lemos M.V.F."/>
            <person name="Locali E.C."/>
            <person name="Machado M.A."/>
            <person name="Madeira A.M.B.N."/>
            <person name="Martinez-Rossi N.M."/>
            <person name="Martins E.C."/>
            <person name="Meidanis J."/>
            <person name="Menck C.F.M."/>
            <person name="Miyaki C.Y."/>
            <person name="Moon D.H."/>
            <person name="Moreira L.M."/>
            <person name="Novo M.T.M."/>
            <person name="Okura V.K."/>
            <person name="Oliveira M.C."/>
            <person name="Oliveira V.R."/>
            <person name="Pereira H.A."/>
            <person name="Rossi A."/>
            <person name="Sena J.A.D."/>
            <person name="Silva C."/>
            <person name="de Souza R.F."/>
            <person name="Spinola L.A.F."/>
            <person name="Takita M.A."/>
            <person name="Tamura R.E."/>
            <person name="Teixeira E.C."/>
            <person name="Tezza R.I.D."/>
            <person name="Trindade dos Santos M."/>
            <person name="Truffi D."/>
            <person name="Tsai S.M."/>
            <person name="White F.F."/>
            <person name="Setubal J.C."/>
            <person name="Kitajima J.P."/>
        </authorList>
    </citation>
    <scope>NUCLEOTIDE SEQUENCE [LARGE SCALE GENOMIC DNA]</scope>
    <source>
        <strain>ATCC 33913 / DSM 3586 / NCPPB 528 / LMG 568 / P 25</strain>
    </source>
</reference>
<gene>
    <name evidence="1" type="primary">frr</name>
    <name type="ordered locus">XCC1370</name>
</gene>
<proteinExistence type="inferred from homology"/>
<accession>Q8PAV6</accession>
<organism>
    <name type="scientific">Xanthomonas campestris pv. campestris (strain ATCC 33913 / DSM 3586 / NCPPB 528 / LMG 568 / P 25)</name>
    <dbReference type="NCBI Taxonomy" id="190485"/>
    <lineage>
        <taxon>Bacteria</taxon>
        <taxon>Pseudomonadati</taxon>
        <taxon>Pseudomonadota</taxon>
        <taxon>Gammaproteobacteria</taxon>
        <taxon>Lysobacterales</taxon>
        <taxon>Lysobacteraceae</taxon>
        <taxon>Xanthomonas</taxon>
    </lineage>
</organism>
<name>RRF_XANCP</name>
<feature type="chain" id="PRO_0000167583" description="Ribosome-recycling factor">
    <location>
        <begin position="1"/>
        <end position="185"/>
    </location>
</feature>
<comment type="function">
    <text evidence="1">Responsible for the release of ribosomes from messenger RNA at the termination of protein biosynthesis. May increase the efficiency of translation by recycling ribosomes from one round of translation to another.</text>
</comment>
<comment type="subcellular location">
    <subcellularLocation>
        <location evidence="1">Cytoplasm</location>
    </subcellularLocation>
</comment>
<comment type="similarity">
    <text evidence="1">Belongs to the RRF family.</text>
</comment>
<keyword id="KW-0963">Cytoplasm</keyword>
<keyword id="KW-0648">Protein biosynthesis</keyword>
<keyword id="KW-1185">Reference proteome</keyword>